<organism>
    <name type="scientific">Metallosphaera sedula (strain ATCC 51363 / DSM 5348 / JCM 9185 / NBRC 15509 / TH2)</name>
    <dbReference type="NCBI Taxonomy" id="399549"/>
    <lineage>
        <taxon>Archaea</taxon>
        <taxon>Thermoproteota</taxon>
        <taxon>Thermoprotei</taxon>
        <taxon>Sulfolobales</taxon>
        <taxon>Sulfolobaceae</taxon>
        <taxon>Metallosphaera</taxon>
    </lineage>
</organism>
<sequence>MKGNQEEYRLKFFLDHDYLRRECKVCKTPFWSKDKTREDCADIPCSDYYFLDMKESNLNWSVSEARRRFLDFFRRNGHEIIPPKPVLARWREDLYLTIASIVDFQPYITSGISPPPANPLVVSQPCIRMDDVDNVGITFGRHLTTFEMGGHHAFNYPDKFLYWKDETVAYAKEFFTKEMGIPEELLNFKESWWEGGGNAGPSFEVTVGGLELATLVFMQYEIRDGEYVPLKLKIVDTGYGIERLAWFTQKTPTAFHAIYGELVDKFLEKLGLPSLNPDMLKVASRFAGRIDPDVPSTIQGHREQVAKAMGLPVKEVSEELTRAARVFQVLDHTKTIALMLGDGLVPSSGGEGYLGRLLIRRALRTLKLLNVDVRLSELVDMQIGFWGKDFTQLVRNRDYILDAVNLEQEKFNEILNRMSSVVSSLTKKKEIGVEDLIQLYDSQGIPPDLMAEEMRSKGLKVEVPHNFYSIVAKRHQSAPVKKEWDTTKLPPEVVKQVKDLPPTEKLYYKDQYARNFEGVIVKSLGKYLVLDRTVFYPEGGGQLGDQGWLLLDGQRVKVVDTQKVGDVVVHVLEREISAKEGDKVKGEIDWVRRFRMMRHHTGTHVVLAAAKKLLGDHVWQAGAEKTPEKARLDITHHRNLTREEVKRIEEMANLVVDDRRPVTPFEINRTEAETKYGVSIYEGGVPNKAVIRLLEIKDWDVESCGGTHVANTADIGGIKIVNVEKIQDGIIRLEYVAGDVISSYAGNLEDKLEGLASKLETSTSQIESRVEKLKEENERMKELIAFYRRQYLDDLEKHVETRNVGKVKIVILPSLKDEDLEREAMRRLTSTQGVVVIHVNQVNGKLQIEIGTSKDLNVSTVVTELVKAGGKGGGRGTFGSVMIEKGTKEEVIDIVERAIKGGNS</sequence>
<feature type="chain" id="PRO_0000347883" description="Alanine--tRNA ligase">
    <location>
        <begin position="1"/>
        <end position="904"/>
    </location>
</feature>
<feature type="binding site" evidence="1">
    <location>
        <position position="600"/>
    </location>
    <ligand>
        <name>Zn(2+)</name>
        <dbReference type="ChEBI" id="CHEBI:29105"/>
    </ligand>
</feature>
<feature type="binding site" evidence="1">
    <location>
        <position position="604"/>
    </location>
    <ligand>
        <name>Zn(2+)</name>
        <dbReference type="ChEBI" id="CHEBI:29105"/>
    </ligand>
</feature>
<feature type="binding site" evidence="1">
    <location>
        <position position="704"/>
    </location>
    <ligand>
        <name>Zn(2+)</name>
        <dbReference type="ChEBI" id="CHEBI:29105"/>
    </ligand>
</feature>
<feature type="binding site" evidence="1">
    <location>
        <position position="708"/>
    </location>
    <ligand>
        <name>Zn(2+)</name>
        <dbReference type="ChEBI" id="CHEBI:29105"/>
    </ligand>
</feature>
<name>SYA_METS5</name>
<keyword id="KW-0030">Aminoacyl-tRNA synthetase</keyword>
<keyword id="KW-0067">ATP-binding</keyword>
<keyword id="KW-0963">Cytoplasm</keyword>
<keyword id="KW-0436">Ligase</keyword>
<keyword id="KW-0479">Metal-binding</keyword>
<keyword id="KW-0547">Nucleotide-binding</keyword>
<keyword id="KW-0648">Protein biosynthesis</keyword>
<keyword id="KW-1185">Reference proteome</keyword>
<keyword id="KW-0694">RNA-binding</keyword>
<keyword id="KW-0820">tRNA-binding</keyword>
<keyword id="KW-0862">Zinc</keyword>
<dbReference type="EC" id="6.1.1.7" evidence="1"/>
<dbReference type="EMBL" id="CP000682">
    <property type="protein sequence ID" value="ABP95793.1"/>
    <property type="molecule type" value="Genomic_DNA"/>
</dbReference>
<dbReference type="RefSeq" id="WP_012021580.1">
    <property type="nucleotide sequence ID" value="NC_009440.1"/>
</dbReference>
<dbReference type="SMR" id="A4YH91"/>
<dbReference type="STRING" id="399549.Msed_1638"/>
<dbReference type="GeneID" id="91756145"/>
<dbReference type="KEGG" id="mse:Msed_1638"/>
<dbReference type="eggNOG" id="arCOG01255">
    <property type="taxonomic scope" value="Archaea"/>
</dbReference>
<dbReference type="HOGENOM" id="CLU_004485_4_0_2"/>
<dbReference type="Proteomes" id="UP000000242">
    <property type="component" value="Chromosome"/>
</dbReference>
<dbReference type="GO" id="GO:0005737">
    <property type="term" value="C:cytoplasm"/>
    <property type="evidence" value="ECO:0007669"/>
    <property type="project" value="UniProtKB-SubCell"/>
</dbReference>
<dbReference type="GO" id="GO:0004813">
    <property type="term" value="F:alanine-tRNA ligase activity"/>
    <property type="evidence" value="ECO:0007669"/>
    <property type="project" value="UniProtKB-UniRule"/>
</dbReference>
<dbReference type="GO" id="GO:0002161">
    <property type="term" value="F:aminoacyl-tRNA deacylase activity"/>
    <property type="evidence" value="ECO:0007669"/>
    <property type="project" value="TreeGrafter"/>
</dbReference>
<dbReference type="GO" id="GO:0005524">
    <property type="term" value="F:ATP binding"/>
    <property type="evidence" value="ECO:0007669"/>
    <property type="project" value="UniProtKB-UniRule"/>
</dbReference>
<dbReference type="GO" id="GO:0000049">
    <property type="term" value="F:tRNA binding"/>
    <property type="evidence" value="ECO:0007669"/>
    <property type="project" value="UniProtKB-KW"/>
</dbReference>
<dbReference type="GO" id="GO:0008270">
    <property type="term" value="F:zinc ion binding"/>
    <property type="evidence" value="ECO:0007669"/>
    <property type="project" value="UniProtKB-UniRule"/>
</dbReference>
<dbReference type="GO" id="GO:0006419">
    <property type="term" value="P:alanyl-tRNA aminoacylation"/>
    <property type="evidence" value="ECO:0007669"/>
    <property type="project" value="UniProtKB-UniRule"/>
</dbReference>
<dbReference type="CDD" id="cd00673">
    <property type="entry name" value="AlaRS_core"/>
    <property type="match status" value="1"/>
</dbReference>
<dbReference type="FunFam" id="2.40.30.130:FF:000010">
    <property type="entry name" value="Alanine--tRNA ligase"/>
    <property type="match status" value="1"/>
</dbReference>
<dbReference type="FunFam" id="3.30.54.20:FF:000004">
    <property type="entry name" value="Alanine--tRNA ligase"/>
    <property type="match status" value="1"/>
</dbReference>
<dbReference type="FunFam" id="3.30.930.10:FF:000056">
    <property type="entry name" value="Alanine--tRNA ligase"/>
    <property type="match status" value="1"/>
</dbReference>
<dbReference type="FunFam" id="3.30.980.10:FF:000004">
    <property type="entry name" value="Alanine--tRNA ligase, cytoplasmic"/>
    <property type="match status" value="1"/>
</dbReference>
<dbReference type="Gene3D" id="2.40.30.130">
    <property type="match status" value="1"/>
</dbReference>
<dbReference type="Gene3D" id="3.30.54.20">
    <property type="match status" value="1"/>
</dbReference>
<dbReference type="Gene3D" id="3.30.930.10">
    <property type="entry name" value="Bira Bifunctional Protein, Domain 2"/>
    <property type="match status" value="1"/>
</dbReference>
<dbReference type="Gene3D" id="3.30.980.10">
    <property type="entry name" value="Threonyl-trna Synthetase, Chain A, domain 2"/>
    <property type="match status" value="1"/>
</dbReference>
<dbReference type="HAMAP" id="MF_00036_A">
    <property type="entry name" value="Ala_tRNA_synth_A"/>
    <property type="match status" value="1"/>
</dbReference>
<dbReference type="InterPro" id="IPR045864">
    <property type="entry name" value="aa-tRNA-synth_II/BPL/LPL"/>
</dbReference>
<dbReference type="InterPro" id="IPR002318">
    <property type="entry name" value="Ala-tRNA-lgiase_IIc"/>
</dbReference>
<dbReference type="InterPro" id="IPR018162">
    <property type="entry name" value="Ala-tRNA-ligase_IIc_anticod-bd"/>
</dbReference>
<dbReference type="InterPro" id="IPR018165">
    <property type="entry name" value="Ala-tRNA-synth_IIc_core"/>
</dbReference>
<dbReference type="InterPro" id="IPR018164">
    <property type="entry name" value="Ala-tRNA-synth_IIc_N"/>
</dbReference>
<dbReference type="InterPro" id="IPR022429">
    <property type="entry name" value="Ala-tRNA_lgiase_arc"/>
</dbReference>
<dbReference type="InterPro" id="IPR050058">
    <property type="entry name" value="Ala-tRNA_ligase"/>
</dbReference>
<dbReference type="InterPro" id="IPR038763">
    <property type="entry name" value="DHH_sf"/>
</dbReference>
<dbReference type="InterPro" id="IPR003156">
    <property type="entry name" value="DHHA1_dom"/>
</dbReference>
<dbReference type="InterPro" id="IPR018163">
    <property type="entry name" value="Thr/Ala-tRNA-synth_IIc_edit"/>
</dbReference>
<dbReference type="InterPro" id="IPR009000">
    <property type="entry name" value="Transl_B-barrel_sf"/>
</dbReference>
<dbReference type="InterPro" id="IPR012947">
    <property type="entry name" value="tRNA_SAD"/>
</dbReference>
<dbReference type="NCBIfam" id="TIGR03683">
    <property type="entry name" value="A-tRNA_syn_arch"/>
    <property type="match status" value="1"/>
</dbReference>
<dbReference type="NCBIfam" id="TIGR00344">
    <property type="entry name" value="alaS"/>
    <property type="match status" value="1"/>
</dbReference>
<dbReference type="PANTHER" id="PTHR11777:SF9">
    <property type="entry name" value="ALANINE--TRNA LIGASE, CYTOPLASMIC"/>
    <property type="match status" value="1"/>
</dbReference>
<dbReference type="PANTHER" id="PTHR11777">
    <property type="entry name" value="ALANYL-TRNA SYNTHETASE"/>
    <property type="match status" value="1"/>
</dbReference>
<dbReference type="Pfam" id="PF02272">
    <property type="entry name" value="DHHA1"/>
    <property type="match status" value="1"/>
</dbReference>
<dbReference type="Pfam" id="PF01411">
    <property type="entry name" value="tRNA-synt_2c"/>
    <property type="match status" value="1"/>
</dbReference>
<dbReference type="Pfam" id="PF07973">
    <property type="entry name" value="tRNA_SAD"/>
    <property type="match status" value="1"/>
</dbReference>
<dbReference type="PRINTS" id="PR00980">
    <property type="entry name" value="TRNASYNTHALA"/>
</dbReference>
<dbReference type="SMART" id="SM00863">
    <property type="entry name" value="tRNA_SAD"/>
    <property type="match status" value="1"/>
</dbReference>
<dbReference type="SUPFAM" id="SSF55681">
    <property type="entry name" value="Class II aaRS and biotin synthetases"/>
    <property type="match status" value="1"/>
</dbReference>
<dbReference type="SUPFAM" id="SSF64182">
    <property type="entry name" value="DHH phosphoesterases"/>
    <property type="match status" value="1"/>
</dbReference>
<dbReference type="SUPFAM" id="SSF101353">
    <property type="entry name" value="Putative anticodon-binding domain of alanyl-tRNA synthetase (AlaRS)"/>
    <property type="match status" value="1"/>
</dbReference>
<dbReference type="SUPFAM" id="SSF55186">
    <property type="entry name" value="ThrRS/AlaRS common domain"/>
    <property type="match status" value="1"/>
</dbReference>
<dbReference type="SUPFAM" id="SSF50447">
    <property type="entry name" value="Translation proteins"/>
    <property type="match status" value="1"/>
</dbReference>
<dbReference type="PROSITE" id="PS50860">
    <property type="entry name" value="AA_TRNA_LIGASE_II_ALA"/>
    <property type="match status" value="1"/>
</dbReference>
<proteinExistence type="inferred from homology"/>
<evidence type="ECO:0000255" key="1">
    <source>
        <dbReference type="HAMAP-Rule" id="MF_00036"/>
    </source>
</evidence>
<protein>
    <recommendedName>
        <fullName evidence="1">Alanine--tRNA ligase</fullName>
        <ecNumber evidence="1">6.1.1.7</ecNumber>
    </recommendedName>
    <alternativeName>
        <fullName evidence="1">Alanyl-tRNA synthetase</fullName>
        <shortName evidence="1">AlaRS</shortName>
    </alternativeName>
</protein>
<accession>A4YH91</accession>
<comment type="function">
    <text evidence="1">Catalyzes the attachment of alanine to tRNA(Ala) in a two-step reaction: alanine is first activated by ATP to form Ala-AMP and then transferred to the acceptor end of tRNA(Ala). Also edits incorrectly charged Ser-tRNA(Ala) and Gly-tRNA(Ala) via its editing domain.</text>
</comment>
<comment type="catalytic activity">
    <reaction evidence="1">
        <text>tRNA(Ala) + L-alanine + ATP = L-alanyl-tRNA(Ala) + AMP + diphosphate</text>
        <dbReference type="Rhea" id="RHEA:12540"/>
        <dbReference type="Rhea" id="RHEA-COMP:9657"/>
        <dbReference type="Rhea" id="RHEA-COMP:9923"/>
        <dbReference type="ChEBI" id="CHEBI:30616"/>
        <dbReference type="ChEBI" id="CHEBI:33019"/>
        <dbReference type="ChEBI" id="CHEBI:57972"/>
        <dbReference type="ChEBI" id="CHEBI:78442"/>
        <dbReference type="ChEBI" id="CHEBI:78497"/>
        <dbReference type="ChEBI" id="CHEBI:456215"/>
        <dbReference type="EC" id="6.1.1.7"/>
    </reaction>
</comment>
<comment type="cofactor">
    <cofactor evidence="1">
        <name>Zn(2+)</name>
        <dbReference type="ChEBI" id="CHEBI:29105"/>
    </cofactor>
    <text evidence="1">Binds 1 zinc ion per subunit.</text>
</comment>
<comment type="subcellular location">
    <subcellularLocation>
        <location evidence="1">Cytoplasm</location>
    </subcellularLocation>
</comment>
<comment type="domain">
    <text evidence="1">Consists of three domains; the N-terminal catalytic domain, the editing domain and the C-terminal C-Ala domain. The editing domain removes incorrectly charged amino acids, while the C-Ala domain, along with tRNA(Ala), serves as a bridge to cooperatively bring together the editing and aminoacylation centers thus stimulating deacylation of misacylated tRNAs.</text>
</comment>
<comment type="similarity">
    <text evidence="1">Belongs to the class-II aminoacyl-tRNA synthetase family.</text>
</comment>
<reference key="1">
    <citation type="journal article" date="2008" name="Appl. Environ. Microbiol.">
        <title>The genome sequence of the metal-mobilizing, extremely thermoacidophilic archaeon Metallosphaera sedula provides insights into bioleaching-associated metabolism.</title>
        <authorList>
            <person name="Auernik K.S."/>
            <person name="Maezato Y."/>
            <person name="Blum P.H."/>
            <person name="Kelly R.M."/>
        </authorList>
    </citation>
    <scope>NUCLEOTIDE SEQUENCE [LARGE SCALE GENOMIC DNA]</scope>
    <source>
        <strain>ATCC 51363 / DSM 5348 / JCM 9185 / NBRC 15509 / TH2</strain>
    </source>
</reference>
<gene>
    <name evidence="1" type="primary">alaS</name>
    <name type="ordered locus">Msed_1638</name>
</gene>